<evidence type="ECO:0000255" key="1">
    <source>
        <dbReference type="PROSITE-ProRule" id="PRU01188"/>
    </source>
</evidence>
<evidence type="ECO:0000269" key="2">
    <source>
    </source>
</evidence>
<evidence type="ECO:0000269" key="3">
    <source>
    </source>
</evidence>
<evidence type="ECO:0000305" key="4"/>
<evidence type="ECO:0007744" key="5">
    <source>
    </source>
</evidence>
<name>KRT85_HUMAN</name>
<organism>
    <name type="scientific">Homo sapiens</name>
    <name type="common">Human</name>
    <dbReference type="NCBI Taxonomy" id="9606"/>
    <lineage>
        <taxon>Eukaryota</taxon>
        <taxon>Metazoa</taxon>
        <taxon>Chordata</taxon>
        <taxon>Craniata</taxon>
        <taxon>Vertebrata</taxon>
        <taxon>Euteleostomi</taxon>
        <taxon>Mammalia</taxon>
        <taxon>Eutheria</taxon>
        <taxon>Euarchontoglires</taxon>
        <taxon>Primates</taxon>
        <taxon>Haplorrhini</taxon>
        <taxon>Catarrhini</taxon>
        <taxon>Hominidae</taxon>
        <taxon>Homo</taxon>
    </lineage>
</organism>
<accession>P78386</accession>
<accession>Q9NSB1</accession>
<protein>
    <recommendedName>
        <fullName>Keratin, type II cuticular Hb5</fullName>
    </recommendedName>
    <alternativeName>
        <fullName>Hair keratin K2.12</fullName>
    </alternativeName>
    <alternativeName>
        <fullName>Keratin-85</fullName>
        <shortName>K85</shortName>
    </alternativeName>
    <alternativeName>
        <fullName>Type II hair keratin Hb5</fullName>
    </alternativeName>
    <alternativeName>
        <fullName>Type-II keratin Kb25</fullName>
    </alternativeName>
</protein>
<proteinExistence type="evidence at protein level"/>
<comment type="subunit">
    <text>Heterotetramer of two type I and two type II keratins.</text>
</comment>
<comment type="interaction">
    <interactant intactId="EBI-1049371">
        <id>P78386</id>
    </interactant>
    <interactant intactId="EBI-10192241">
        <id>O95833</id>
        <label>CLIC3</label>
    </interactant>
    <organismsDiffer>false</organismsDiffer>
    <experiments>3</experiments>
</comment>
<comment type="interaction">
    <interactant intactId="EBI-1049371">
        <id>P78386</id>
    </interactant>
    <interactant intactId="EBI-10192698">
        <id>Q02930-3</id>
        <label>CREB5</label>
    </interactant>
    <organismsDiffer>false</organismsDiffer>
    <experiments>3</experiments>
</comment>
<comment type="interaction">
    <interactant intactId="EBI-1049371">
        <id>P78386</id>
    </interactant>
    <interactant intactId="EBI-3867333">
        <id>A8MQ03</id>
        <label>CYSRT1</label>
    </interactant>
    <organismsDiffer>false</organismsDiffer>
    <experiments>3</experiments>
</comment>
<comment type="interaction">
    <interactant intactId="EBI-1049371">
        <id>P78386</id>
    </interactant>
    <interactant intactId="EBI-11975289">
        <id>Q9Y223-2</id>
        <label>GNE</label>
    </interactant>
    <organismsDiffer>false</organismsDiffer>
    <experiments>3</experiments>
</comment>
<comment type="interaction">
    <interactant intactId="EBI-1049371">
        <id>P78386</id>
    </interactant>
    <interactant intactId="EBI-11956675">
        <id>Q9GZV7</id>
        <label>HAPLN2</label>
    </interactant>
    <organismsDiffer>false</organismsDiffer>
    <experiments>3</experiments>
</comment>
<comment type="interaction">
    <interactant intactId="EBI-1049371">
        <id>P78386</id>
    </interactant>
    <interactant intactId="EBI-6426443">
        <id>Q2WGJ6</id>
        <label>KLHL38</label>
    </interactant>
    <organismsDiffer>false</organismsDiffer>
    <experiments>3</experiments>
</comment>
<comment type="interaction">
    <interactant intactId="EBI-1049371">
        <id>P78386</id>
    </interactant>
    <interactant intactId="EBI-739566">
        <id>P19012</id>
        <label>KRT15</label>
    </interactant>
    <organismsDiffer>false</organismsDiffer>
    <experiments>3</experiments>
</comment>
<comment type="interaction">
    <interactant intactId="EBI-1049371">
        <id>P78386</id>
    </interactant>
    <interactant intactId="EBI-356410">
        <id>P08779</id>
        <label>KRT16</label>
    </interactant>
    <organismsDiffer>false</organismsDiffer>
    <experiments>3</experiments>
</comment>
<comment type="interaction">
    <interactant intactId="EBI-1049371">
        <id>P78386</id>
    </interactant>
    <interactant intactId="EBI-742756">
        <id>P08727</id>
        <label>KRT19</label>
    </interactant>
    <organismsDiffer>false</organismsDiffer>
    <experiments>3</experiments>
</comment>
<comment type="interaction">
    <interactant intactId="EBI-1049371">
        <id>P78386</id>
    </interactant>
    <interactant intactId="EBI-11980019">
        <id>Q7Z3Z0</id>
        <label>KRT25</label>
    </interactant>
    <organismsDiffer>false</organismsDiffer>
    <experiments>5</experiments>
</comment>
<comment type="interaction">
    <interactant intactId="EBI-1049371">
        <id>P78386</id>
    </interactant>
    <interactant intactId="EBI-12084444">
        <id>Q7Z3Y9</id>
        <label>KRT26</label>
    </interactant>
    <organismsDiffer>false</organismsDiffer>
    <experiments>3</experiments>
</comment>
<comment type="interaction">
    <interactant intactId="EBI-1049371">
        <id>P78386</id>
    </interactant>
    <interactant intactId="EBI-3044087">
        <id>Q7Z3Y8</id>
        <label>KRT27</label>
    </interactant>
    <organismsDiffer>false</organismsDiffer>
    <experiments>3</experiments>
</comment>
<comment type="interaction">
    <interactant intactId="EBI-1049371">
        <id>P78386</id>
    </interactant>
    <interactant intactId="EBI-948001">
        <id>Q15323</id>
        <label>KRT31</label>
    </interactant>
    <organismsDiffer>false</organismsDiffer>
    <experiments>3</experiments>
</comment>
<comment type="interaction">
    <interactant intactId="EBI-1049371">
        <id>P78386</id>
    </interactant>
    <interactant intactId="EBI-1049638">
        <id>Q14525</id>
        <label>KRT33B</label>
    </interactant>
    <organismsDiffer>false</organismsDiffer>
    <experiments>3</experiments>
</comment>
<comment type="interaction">
    <interactant intactId="EBI-1049371">
        <id>P78386</id>
    </interactant>
    <interactant intactId="EBI-1047093">
        <id>O76011</id>
        <label>KRT34</label>
    </interactant>
    <organismsDiffer>false</organismsDiffer>
    <experiments>6</experiments>
</comment>
<comment type="interaction">
    <interactant intactId="EBI-1049371">
        <id>P78386</id>
    </interactant>
    <interactant intactId="EBI-1058674">
        <id>Q92764</id>
        <label>KRT35</label>
    </interactant>
    <organismsDiffer>false</organismsDiffer>
    <experiments>3</experiments>
</comment>
<comment type="interaction">
    <interactant intactId="EBI-1049371">
        <id>P78386</id>
    </interactant>
    <interactant intactId="EBI-11958506">
        <id>O76013-2</id>
        <label>KRT36</label>
    </interactant>
    <organismsDiffer>false</organismsDiffer>
    <experiments>3</experiments>
</comment>
<comment type="interaction">
    <interactant intactId="EBI-1049371">
        <id>P78386</id>
    </interactant>
    <interactant intactId="EBI-1045716">
        <id>O76014</id>
        <label>KRT37</label>
    </interactant>
    <organismsDiffer>false</organismsDiffer>
    <experiments>5</experiments>
</comment>
<comment type="interaction">
    <interactant intactId="EBI-1049371">
        <id>P78386</id>
    </interactant>
    <interactant intactId="EBI-1047263">
        <id>O76015</id>
        <label>KRT38</label>
    </interactant>
    <organismsDiffer>false</organismsDiffer>
    <experiments>3</experiments>
</comment>
<comment type="interaction">
    <interactant intactId="EBI-1049371">
        <id>P78386</id>
    </interactant>
    <interactant intactId="EBI-11958242">
        <id>Q6A163</id>
        <label>KRT39</label>
    </interactant>
    <organismsDiffer>false</organismsDiffer>
    <experiments>3</experiments>
</comment>
<comment type="interaction">
    <interactant intactId="EBI-1049371">
        <id>P78386</id>
    </interactant>
    <interactant intactId="EBI-10171697">
        <id>Q6A162</id>
        <label>KRT40</label>
    </interactant>
    <organismsDiffer>false</organismsDiffer>
    <experiments>3</experiments>
</comment>
<comment type="interaction">
    <interactant intactId="EBI-1049371">
        <id>P78386</id>
    </interactant>
    <interactant intactId="EBI-8474075">
        <id>Q68G74</id>
        <label>LHX8</label>
    </interactant>
    <organismsDiffer>false</organismsDiffer>
    <experiments>3</experiments>
</comment>
<comment type="interaction">
    <interactant intactId="EBI-1049371">
        <id>P78386</id>
    </interactant>
    <interactant intactId="EBI-740446">
        <id>P32242</id>
        <label>OTX1</label>
    </interactant>
    <organismsDiffer>false</organismsDiffer>
    <experiments>3</experiments>
</comment>
<comment type="interaction">
    <interactant intactId="EBI-1049371">
        <id>P78386</id>
    </interactant>
    <interactant intactId="EBI-358708">
        <id>Q9NYJ8</id>
        <label>TAB2</label>
    </interactant>
    <organismsDiffer>false</organismsDiffer>
    <experiments>3</experiments>
</comment>
<comment type="interaction">
    <interactant intactId="EBI-1049371">
        <id>P78386</id>
    </interactant>
    <interactant intactId="EBI-625509">
        <id>Q8N720</id>
        <label>ZNF655</label>
    </interactant>
    <organismsDiffer>false</organismsDiffer>
    <experiments>3</experiments>
</comment>
<comment type="tissue specificity">
    <text evidence="3">Synthesis occurs immediately above a small population of matrix cells at the base of the hair bulb and the trichocytes lining the dermal papilla and extends upward through the matrix and ends in the lower part of the cortex of the hair shaft.</text>
</comment>
<comment type="disease" evidence="2">
    <disease id="DI-00427">
        <name>Ectodermal dysplasia 4, hair/nail type</name>
        <acronym>ECTD4</acronym>
        <description>A form of ectodermal dysplasia, a heterogeneous group of disorders due to abnormal development of two or more ectodermal structures such as hair, teeth, nails and sweat glands, with or without any additional clinical sign. Each combination of clinical features represents a different type of ectodermal dysplasia. ECTD4 is characterized by complete alopecia, hypotricosis and nail dystrophy in all digits. There is no evidence of any other abnormality. Inheritance can be autosomal dominant or recessive.</description>
        <dbReference type="MIM" id="602032"/>
    </disease>
    <text>The disease is caused by variants affecting the gene represented in this entry.</text>
</comment>
<comment type="miscellaneous">
    <text>There are two types of hair/microfibrillar keratin, I (acidic) and II (neutral to basic).</text>
</comment>
<comment type="similarity">
    <text evidence="1">Belongs to the intermediate filament family.</text>
</comment>
<keyword id="KW-0175">Coiled coil</keyword>
<keyword id="KW-0225">Disease variant</keyword>
<keyword id="KW-0038">Ectodermal dysplasia</keyword>
<keyword id="KW-1063">Hypotrichosis</keyword>
<keyword id="KW-0403">Intermediate filament</keyword>
<keyword id="KW-1017">Isopeptide bond</keyword>
<keyword id="KW-0416">Keratin</keyword>
<keyword id="KW-1267">Proteomics identification</keyword>
<keyword id="KW-1185">Reference proteome</keyword>
<keyword id="KW-0832">Ubl conjugation</keyword>
<gene>
    <name type="primary">KRT85</name>
    <name type="synonym">KRTHB5</name>
</gene>
<reference key="1">
    <citation type="journal article" date="1997" name="Differentiation">
        <title>Sequences and differential expression of three novel human type-II hair keratins.</title>
        <authorList>
            <person name="Rogers M.A."/>
            <person name="Langbein L."/>
            <person name="Praetzel S."/>
            <person name="Krieg T."/>
            <person name="Winter H."/>
            <person name="Schweizer J."/>
        </authorList>
    </citation>
    <scope>NUCLEOTIDE SEQUENCE [MRNA]</scope>
    <scope>TISSUE SPECIFICITY</scope>
</reference>
<reference key="2">
    <citation type="journal article" date="2000" name="J. Invest. Dermatol.">
        <title>Characterization of a 300 kbp region of human DNA containing the type II hair keratin.</title>
        <authorList>
            <person name="Rogers M.A."/>
            <person name="Winter H."/>
            <person name="Langbein L."/>
            <person name="Wolf C."/>
            <person name="Schweizer J."/>
        </authorList>
    </citation>
    <scope>NUCLEOTIDE SEQUENCE [GENOMIC DNA]</scope>
</reference>
<reference key="3">
    <citation type="journal article" date="2014" name="Proc. Natl. Acad. Sci. U.S.A.">
        <title>Mapping of SUMO sites and analysis of SUMOylation changes induced by external stimuli.</title>
        <authorList>
            <person name="Impens F."/>
            <person name="Radoshevich L."/>
            <person name="Cossart P."/>
            <person name="Ribet D."/>
        </authorList>
    </citation>
    <scope>SUMOYLATION [LARGE SCALE ANALYSIS] AT LYS-229</scope>
    <scope>IDENTIFICATION BY MASS SPECTROMETRY [LARGE SCALE ANALYSIS]</scope>
</reference>
<reference key="4">
    <citation type="journal article" date="2006" name="J. Med. Genet.">
        <title>A mutation in the hair matrix and cuticle keratin KRTHB5 gene causes ectodermal dysplasia of hair and nail type.</title>
        <authorList>
            <person name="Naeem M."/>
            <person name="Wajid M."/>
            <person name="Lee K."/>
            <person name="Leal S.M."/>
            <person name="Ahmad W."/>
        </authorList>
    </citation>
    <scope>VARIANT ECTD4 HIS-78</scope>
</reference>
<sequence length="507" mass="55802">MSCRSYRISSGCGVTRNFSSCSAVAPKTGNRCCISAAPYRGVSCYRGLTGFGSRSLCNLGSCGPRIAVGGFRAGSCGRSFGYRSGGVCGPSPPCITTVSVNESLLTPLNLEIDPNAQCVKQEEKEQIKSLNSRFAAFIDKVRFLEQQNKLLETKWQFYQNQRCCESNLEPLFSGYIETLRREAECVEADSGRLASELNHVQEVLEGYKKKYEEEVALRATAENEFVVLKKDVDCAYLRKSDLEANVEALVEESSFLRRLYEEEIRVLQAHISDTSVIVKMDNSRDLNMDCIIAEIKAQYDDVASRSRAEAESWYRSKCEEMKATVIRHGETLRRTKEEINELNRMIQRLTAEIENAKCQRAKLEAAVAEAEQQGEAALSDARCKLAELEGALQKAKQDMACLLKEYQEVMNSKLGLDIEIATYRRLLEGEEHRLCEGVGSVNVCVSSSRGGVSCGGLSYSTTPGRQITSGPSAIGGSITVVAPDSCAPCQPRSSSFSCGSSRSVRFA</sequence>
<feature type="chain" id="PRO_0000063702" description="Keratin, type II cuticular Hb5">
    <location>
        <begin position="1"/>
        <end position="507"/>
    </location>
</feature>
<feature type="domain" description="IF rod" evidence="1">
    <location>
        <begin position="123"/>
        <end position="434"/>
    </location>
</feature>
<feature type="region of interest" description="Head">
    <location>
        <begin position="1"/>
        <end position="123"/>
    </location>
</feature>
<feature type="region of interest" description="Coil 1A">
    <location>
        <begin position="124"/>
        <end position="158"/>
    </location>
</feature>
<feature type="region of interest" description="Linker 1">
    <location>
        <begin position="159"/>
        <end position="168"/>
    </location>
</feature>
<feature type="region of interest" description="Coil 1B">
    <location>
        <begin position="169"/>
        <end position="269"/>
    </location>
</feature>
<feature type="region of interest" description="Linker 12">
    <location>
        <begin position="270"/>
        <end position="286"/>
    </location>
</feature>
<feature type="region of interest" description="Coil 2">
    <location>
        <begin position="287"/>
        <end position="430"/>
    </location>
</feature>
<feature type="region of interest" description="Tail">
    <location>
        <begin position="431"/>
        <end position="507"/>
    </location>
</feature>
<feature type="cross-link" description="Glycyl lysine isopeptide (Lys-Gly) (interchain with G-Cter in SUMO1)" evidence="5">
    <location>
        <position position="229"/>
    </location>
</feature>
<feature type="sequence variant" id="VAR_029657" description="In ECTD4; dbSNP:rs61630004." evidence="2">
    <original>R</original>
    <variation>H</variation>
    <location>
        <position position="78"/>
    </location>
</feature>
<feature type="sequence variant" id="VAR_049804" description="In dbSNP:rs2852471.">
    <original>W</original>
    <variation>L</variation>
    <location>
        <position position="155"/>
    </location>
</feature>
<feature type="sequence conflict" description="In Ref. 2; CAB76830." evidence="4" ref="2">
    <original>W</original>
    <variation>V</variation>
    <location>
        <position position="155"/>
    </location>
</feature>
<dbReference type="EMBL" id="X99140">
    <property type="protein sequence ID" value="CAA67577.1"/>
    <property type="molecule type" value="mRNA"/>
</dbReference>
<dbReference type="EMBL" id="Y19210">
    <property type="protein sequence ID" value="CAB76830.1"/>
    <property type="molecule type" value="Genomic_DNA"/>
</dbReference>
<dbReference type="CCDS" id="CCDS8824.1"/>
<dbReference type="RefSeq" id="NP_001287739.1">
    <property type="nucleotide sequence ID" value="NM_001300810.1"/>
</dbReference>
<dbReference type="RefSeq" id="NP_002274.1">
    <property type="nucleotide sequence ID" value="NM_002283.4"/>
</dbReference>
<dbReference type="SMR" id="P78386"/>
<dbReference type="BioGRID" id="110089">
    <property type="interactions" value="60"/>
</dbReference>
<dbReference type="FunCoup" id="P78386">
    <property type="interactions" value="126"/>
</dbReference>
<dbReference type="IntAct" id="P78386">
    <property type="interactions" value="42"/>
</dbReference>
<dbReference type="STRING" id="9606.ENSP00000257901"/>
<dbReference type="ChEMBL" id="CHEMBL4523263"/>
<dbReference type="GlyGen" id="P78386">
    <property type="glycosylation" value="1 site, 1 O-linked glycan (1 site)"/>
</dbReference>
<dbReference type="iPTMnet" id="P78386"/>
<dbReference type="MetOSite" id="P78386"/>
<dbReference type="PhosphoSitePlus" id="P78386"/>
<dbReference type="SwissPalm" id="P78386"/>
<dbReference type="BioMuta" id="KRT85"/>
<dbReference type="DMDM" id="48474780"/>
<dbReference type="jPOST" id="P78386"/>
<dbReference type="MassIVE" id="P78386"/>
<dbReference type="PaxDb" id="9606-ENSP00000257901"/>
<dbReference type="PeptideAtlas" id="P78386"/>
<dbReference type="ProteomicsDB" id="57610"/>
<dbReference type="Antibodypedia" id="56660">
    <property type="antibodies" value="40 antibodies from 16 providers"/>
</dbReference>
<dbReference type="DNASU" id="3891"/>
<dbReference type="Ensembl" id="ENST00000257901.7">
    <property type="protein sequence ID" value="ENSP00000257901.3"/>
    <property type="gene ID" value="ENSG00000135443.8"/>
</dbReference>
<dbReference type="GeneID" id="3891"/>
<dbReference type="KEGG" id="hsa:3891"/>
<dbReference type="MANE-Select" id="ENST00000257901.7">
    <property type="protein sequence ID" value="ENSP00000257901.3"/>
    <property type="RefSeq nucleotide sequence ID" value="NM_002283.4"/>
    <property type="RefSeq protein sequence ID" value="NP_002274.1"/>
</dbReference>
<dbReference type="UCSC" id="uc001sag.4">
    <property type="organism name" value="human"/>
</dbReference>
<dbReference type="AGR" id="HGNC:6462"/>
<dbReference type="CTD" id="3891"/>
<dbReference type="DisGeNET" id="3891"/>
<dbReference type="GeneCards" id="KRT85"/>
<dbReference type="HGNC" id="HGNC:6462">
    <property type="gene designation" value="KRT85"/>
</dbReference>
<dbReference type="HPA" id="ENSG00000135443">
    <property type="expression patterns" value="Tissue enriched (skin)"/>
</dbReference>
<dbReference type="MalaCards" id="KRT85"/>
<dbReference type="MIM" id="602032">
    <property type="type" value="phenotype"/>
</dbReference>
<dbReference type="MIM" id="602767">
    <property type="type" value="gene"/>
</dbReference>
<dbReference type="neXtProt" id="NX_P78386"/>
<dbReference type="OpenTargets" id="ENSG00000135443"/>
<dbReference type="Orphanet" id="69084">
    <property type="disease" value="Pure hair and nail ectodermal dysplasia"/>
</dbReference>
<dbReference type="PharmGKB" id="PA30251"/>
<dbReference type="VEuPathDB" id="HostDB:ENSG00000135443"/>
<dbReference type="eggNOG" id="ENOG502SK5S">
    <property type="taxonomic scope" value="Eukaryota"/>
</dbReference>
<dbReference type="GeneTree" id="ENSGT00940000162337"/>
<dbReference type="HOGENOM" id="CLU_012560_5_0_1"/>
<dbReference type="InParanoid" id="P78386"/>
<dbReference type="OMA" id="CRSYRIN"/>
<dbReference type="OrthoDB" id="9440123at2759"/>
<dbReference type="PAN-GO" id="P78386">
    <property type="GO annotations" value="4 GO annotations based on evolutionary models"/>
</dbReference>
<dbReference type="PhylomeDB" id="P78386"/>
<dbReference type="TreeFam" id="TF332742"/>
<dbReference type="PathwayCommons" id="P78386"/>
<dbReference type="Reactome" id="R-HSA-6805567">
    <property type="pathway name" value="Keratinization"/>
</dbReference>
<dbReference type="Reactome" id="R-HSA-6809371">
    <property type="pathway name" value="Formation of the cornified envelope"/>
</dbReference>
<dbReference type="SignaLink" id="P78386"/>
<dbReference type="BioGRID-ORCS" id="3891">
    <property type="hits" value="6 hits in 1138 CRISPR screens"/>
</dbReference>
<dbReference type="ChiTaRS" id="KRT85">
    <property type="organism name" value="human"/>
</dbReference>
<dbReference type="GeneWiki" id="KRT85"/>
<dbReference type="GenomeRNAi" id="3891"/>
<dbReference type="Pharos" id="P78386">
    <property type="development level" value="Tbio"/>
</dbReference>
<dbReference type="PRO" id="PR:P78386"/>
<dbReference type="Proteomes" id="UP000005640">
    <property type="component" value="Chromosome 12"/>
</dbReference>
<dbReference type="RNAct" id="P78386">
    <property type="molecule type" value="protein"/>
</dbReference>
<dbReference type="Bgee" id="ENSG00000135443">
    <property type="expression patterns" value="Expressed in upper arm skin and 89 other cell types or tissues"/>
</dbReference>
<dbReference type="ExpressionAtlas" id="P78386">
    <property type="expression patterns" value="baseline and differential"/>
</dbReference>
<dbReference type="GO" id="GO:0005829">
    <property type="term" value="C:cytosol"/>
    <property type="evidence" value="ECO:0000304"/>
    <property type="project" value="Reactome"/>
</dbReference>
<dbReference type="GO" id="GO:0005615">
    <property type="term" value="C:extracellular space"/>
    <property type="evidence" value="ECO:0007005"/>
    <property type="project" value="UniProtKB"/>
</dbReference>
<dbReference type="GO" id="GO:0045095">
    <property type="term" value="C:keratin filament"/>
    <property type="evidence" value="ECO:0000318"/>
    <property type="project" value="GO_Central"/>
</dbReference>
<dbReference type="GO" id="GO:0030280">
    <property type="term" value="F:structural constituent of skin epidermis"/>
    <property type="evidence" value="ECO:0000318"/>
    <property type="project" value="GO_Central"/>
</dbReference>
<dbReference type="GO" id="GO:0005198">
    <property type="term" value="F:structural molecule activity"/>
    <property type="evidence" value="ECO:0000304"/>
    <property type="project" value="ProtInc"/>
</dbReference>
<dbReference type="GO" id="GO:0008544">
    <property type="term" value="P:epidermis development"/>
    <property type="evidence" value="ECO:0000304"/>
    <property type="project" value="ProtInc"/>
</dbReference>
<dbReference type="GO" id="GO:0045109">
    <property type="term" value="P:intermediate filament organization"/>
    <property type="evidence" value="ECO:0000318"/>
    <property type="project" value="GO_Central"/>
</dbReference>
<dbReference type="GO" id="GO:0031424">
    <property type="term" value="P:keratinization"/>
    <property type="evidence" value="ECO:0000318"/>
    <property type="project" value="GO_Central"/>
</dbReference>
<dbReference type="FunFam" id="1.20.5.1160:FF:000001">
    <property type="entry name" value="Keratin type II"/>
    <property type="match status" value="1"/>
</dbReference>
<dbReference type="FunFam" id="1.20.5.170:FF:000004">
    <property type="entry name" value="Keratin, type II cytoskeletal 5"/>
    <property type="match status" value="1"/>
</dbReference>
<dbReference type="FunFam" id="1.20.5.500:FF:000001">
    <property type="entry name" value="Type II keratin 23"/>
    <property type="match status" value="1"/>
</dbReference>
<dbReference type="Gene3D" id="1.20.5.170">
    <property type="match status" value="1"/>
</dbReference>
<dbReference type="Gene3D" id="1.20.5.500">
    <property type="entry name" value="Single helix bin"/>
    <property type="match status" value="1"/>
</dbReference>
<dbReference type="Gene3D" id="1.20.5.1160">
    <property type="entry name" value="Vasodilator-stimulated phosphoprotein"/>
    <property type="match status" value="1"/>
</dbReference>
<dbReference type="InterPro" id="IPR018039">
    <property type="entry name" value="IF_conserved"/>
</dbReference>
<dbReference type="InterPro" id="IPR039008">
    <property type="entry name" value="IF_rod_dom"/>
</dbReference>
<dbReference type="InterPro" id="IPR032444">
    <property type="entry name" value="Keratin_2_head"/>
</dbReference>
<dbReference type="InterPro" id="IPR003054">
    <property type="entry name" value="Keratin_II"/>
</dbReference>
<dbReference type="PANTHER" id="PTHR45616">
    <property type="entry name" value="GATA-TYPE DOMAIN-CONTAINING PROTEIN"/>
    <property type="match status" value="1"/>
</dbReference>
<dbReference type="PANTHER" id="PTHR45616:SF43">
    <property type="entry name" value="KERATIN, TYPE II CUTICULAR HB5"/>
    <property type="match status" value="1"/>
</dbReference>
<dbReference type="Pfam" id="PF00038">
    <property type="entry name" value="Filament"/>
    <property type="match status" value="1"/>
</dbReference>
<dbReference type="Pfam" id="PF16208">
    <property type="entry name" value="Keratin_2_head"/>
    <property type="match status" value="1"/>
</dbReference>
<dbReference type="PRINTS" id="PR01276">
    <property type="entry name" value="TYPE2KERATIN"/>
</dbReference>
<dbReference type="SMART" id="SM01391">
    <property type="entry name" value="Filament"/>
    <property type="match status" value="1"/>
</dbReference>
<dbReference type="SUPFAM" id="SSF64593">
    <property type="entry name" value="Intermediate filament protein, coiled coil region"/>
    <property type="match status" value="2"/>
</dbReference>
<dbReference type="PROSITE" id="PS00226">
    <property type="entry name" value="IF_ROD_1"/>
    <property type="match status" value="1"/>
</dbReference>
<dbReference type="PROSITE" id="PS51842">
    <property type="entry name" value="IF_ROD_2"/>
    <property type="match status" value="1"/>
</dbReference>